<sequence>MRIALAGAGAFGEKHLDGLKNIDGVEIVSIISRKAEQAAEVAAKYGAKHSGTDLSEALARDDVDAVILCTPTQMHAEQAIACMNAGKHVQVEIPLADSWADAEAVMKKSQETGLVCMVGHTRRFNPSHQYIHNKIVAGELAIQQMDVQTYFFRRKNMNAKGEPRSWTDHLLWHHAAHTVDLFAYQAGKIVQANAVQGPIHPELGIAMDMSIQLKSETGAICTLSLSFNNDGPLGTFFRYICDNGTWIARYDDLVTGKEEPVDVSKVDVSMNGIELQDREFIAAIREGREPNSSVARVLDCYRVLGELEVQLEKQG</sequence>
<accession>Q9KWL3</accession>
<reference key="1">
    <citation type="journal article" date="1990" name="J. Bacteriol.">
        <title>Molecular cloning of the protocatechuate 4,5-dioxygenase genes of Pseudomonas paucimobilis.</title>
        <authorList>
            <person name="Noda Y."/>
            <person name="Nishikawa S."/>
            <person name="Shiozuka K."/>
            <person name="Kadokura H."/>
            <person name="Nakajima H."/>
            <person name="Yoda K."/>
            <person name="Katayama Y."/>
            <person name="Morohoshi N."/>
            <person name="Haraguchi T."/>
            <person name="Yamasaki M."/>
        </authorList>
    </citation>
    <scope>NUCLEOTIDE SEQUENCE [GENOMIC DNA]</scope>
    <source>
        <strain>NBRC 103272 / SYK-6</strain>
    </source>
</reference>
<reference key="2">
    <citation type="journal article" date="1999" name="J. Bacteriol.">
        <title>Genetic and biochemical characterization of a 2-pyrone-4, 6-dicarboxylic acid hydrolase involved in the protocatechuate 4, 5-cleavage pathway of Sphingomonas paucimobilis SYK-6.</title>
        <authorList>
            <person name="Masai E."/>
            <person name="Shinohara S."/>
            <person name="Hara H."/>
            <person name="Nishikawa S."/>
            <person name="Katayama Y."/>
            <person name="Fukuda M."/>
        </authorList>
    </citation>
    <scope>NUCLEOTIDE SEQUENCE [GENOMIC DNA]</scope>
    <source>
        <strain>NBRC 103272 / SYK-6</strain>
    </source>
</reference>
<reference key="3">
    <citation type="journal article" date="2000" name="J. Bacteriol.">
        <title>Genetic and biochemical characterization of 4-carboxy-2-hydroxymuconate-6-semialdehyde dehydrogenase and its role in the protocatechuate 4,5-cleavage pathway in Sphingomonas paucimobilis SYK-6.</title>
        <authorList>
            <person name="Masai E."/>
            <person name="Momose K."/>
            <person name="Hara H."/>
            <person name="Nishikawa S."/>
            <person name="Katayama Y."/>
            <person name="Fukuda M."/>
        </authorList>
    </citation>
    <scope>NUCLEOTIDE SEQUENCE [GENOMIC DNA]</scope>
    <scope>PROTEIN SEQUENCE OF 1-20</scope>
    <scope>FUNCTION AS A CHMS DEHYDROGENASE</scope>
    <scope>CATALYTIC ACTIVITY</scope>
    <scope>BIOPHYSICOCHEMICAL PROPERTIES</scope>
    <scope>DISRUPTION PHENOTYPE</scope>
    <scope>ACTIVITY REGULATION</scope>
    <scope>SUBUNIT</scope>
    <scope>NOMENCLATURE</scope>
    <source>
        <strain>NBRC 103272 / SYK-6</strain>
    </source>
</reference>
<reference key="4">
    <citation type="journal article" date="2000" name="J. Bacteriol.">
        <title>The 4-oxalomesaconate hydratase gene, involved in the protocatechuate 4,5-cleavage pathway, is essential to vanillate and syringate degradation in Sphingomonas paucimobilis SYK-6.</title>
        <authorList>
            <person name="Hara H."/>
            <person name="Masai E."/>
            <person name="Katayama Y."/>
            <person name="Fukuda M."/>
        </authorList>
    </citation>
    <scope>NUCLEOTIDE SEQUENCE [GENOMIC DNA]</scope>
    <source>
        <strain>NBRC 103272 / SYK-6</strain>
    </source>
</reference>
<reference key="5">
    <citation type="journal article" date="2003" name="J. Bacteriol.">
        <title>Characterization of the 4-carboxy-4-hydroxy-2-oxoadipate aldolase gene and operon structure of the protocatechuate 4,5-cleavage pathway genes in Sphingomonas paucimobilis SYK-6.</title>
        <authorList>
            <person name="Hara H."/>
            <person name="Masai E."/>
            <person name="Miyauchi K."/>
            <person name="Katayama Y."/>
            <person name="Fukuda M."/>
        </authorList>
    </citation>
    <scope>NUCLEOTIDE SEQUENCE [GENOMIC DNA]</scope>
    <source>
        <strain>NBRC 103272 / SYK-6</strain>
    </source>
</reference>
<comment type="function">
    <text evidence="1">Involved in the degradation of protocatechuate (PCA) via the PCA 4,5-cleavage pathway. Catalyzes the oxidation of the hemiacetal form of 4-carboxy-2-hydroxymuconate-6-semialdehyde (CHMS) to produce 2-pyrone-4,6-dicarboxylate (PDC). LigC has 10-times-higher affinity to NADP than to NAD.</text>
</comment>
<comment type="catalytic activity">
    <reaction evidence="1">
        <text>4-carboxy-2-hydroxymuconate semialdehyde hemiacetal + NADP(+) = 2-oxo-2H-pyran-4,6-dicarboxylate + NADPH + H(+)</text>
        <dbReference type="Rhea" id="RHEA:29587"/>
        <dbReference type="ChEBI" id="CHEBI:15378"/>
        <dbReference type="ChEBI" id="CHEBI:57783"/>
        <dbReference type="ChEBI" id="CHEBI:58304"/>
        <dbReference type="ChEBI" id="CHEBI:58349"/>
        <dbReference type="ChEBI" id="CHEBI:61985"/>
        <dbReference type="EC" id="1.1.1.312"/>
    </reaction>
</comment>
<comment type="activity regulation">
    <text evidence="1">Inhibited by p-chloromercuribenzoate (10 mM), HgCl2 (10 mM), or 5,5-dithiobis(2-nitrobenzoate) (100 mM).</text>
</comment>
<comment type="biophysicochemical properties">
    <kinetics>
        <KM evidence="1">20.6 uM for NAD (with CHMS as substrate at 25 degrees Celsius and pH 8)</KM>
        <KM evidence="1">24.6 uM for CHMS (with NADP as cofactor at 25 degrees Celsius and pH 8)</KM>
        <KM evidence="1">26 uM for NADP (with CHMS as substrate at 25 degrees Celsius and pH 8)</KM>
        <KM evidence="1">252 uM for CHMS (with NAD as cofactor at 25 degrees Celsius and pH 8)</KM>
        <Vmax evidence="1">363.0 umol/min/mg enzyme with CHMS as substrate (with NADP as cofactor at 25 degrees Celsius and pH 8)</Vmax>
        <Vmax evidence="1">449.0 umol/min/mg enzyme with CHMS as substrate (with NAD as cofactor at 25 degrees Celsius and pH 8)</Vmax>
    </kinetics>
    <phDependence>
        <text evidence="1">Optimum pH is 8.</text>
    </phDependence>
    <temperatureDependence>
        <text evidence="1">Optimum temperature is 25 degrees Celsius.</text>
    </temperatureDependence>
</comment>
<comment type="pathway">
    <text>Secondary metabolite metabolism; lignin degradation.</text>
</comment>
<comment type="subunit">
    <text evidence="1">Homodimer.</text>
</comment>
<comment type="disruption phenotype">
    <text evidence="1">Disruption of this gene prevents growth with vanillate. Only PCA is accumulated during the incubation of vanillate with the whole cells of the ligC insertion mutant. A repression of PCA 4,5-dioxygenase (LigAB) activity is also observed.</text>
</comment>
<comment type="similarity">
    <text evidence="2">Belongs to the Gfo/Idh/MocA family.</text>
</comment>
<dbReference type="EC" id="1.1.1.312"/>
<dbReference type="EMBL" id="AB035122">
    <property type="protein sequence ID" value="BAA97119.1"/>
    <property type="molecule type" value="Genomic_DNA"/>
</dbReference>
<dbReference type="EMBL" id="AB073227">
    <property type="protein sequence ID" value="BAB88744.1"/>
    <property type="molecule type" value="Genomic_DNA"/>
</dbReference>
<dbReference type="RefSeq" id="WP_014075575.1">
    <property type="nucleotide sequence ID" value="NC_015976.1"/>
</dbReference>
<dbReference type="SMR" id="Q9KWL3"/>
<dbReference type="STRING" id="627192.SLG_12490"/>
<dbReference type="KEGG" id="ag:BAA97119"/>
<dbReference type="OrthoDB" id="9792935at2"/>
<dbReference type="BioCyc" id="MetaCyc:MONOMER-3466"/>
<dbReference type="UniPathway" id="UPA00892"/>
<dbReference type="GO" id="GO:0050606">
    <property type="term" value="F:4-carboxy-2-hydroxymuconate semialdehyde hemiacetal dehydrogenase activity"/>
    <property type="evidence" value="ECO:0000314"/>
    <property type="project" value="UniProtKB"/>
</dbReference>
<dbReference type="GO" id="GO:0000166">
    <property type="term" value="F:nucleotide binding"/>
    <property type="evidence" value="ECO:0007669"/>
    <property type="project" value="InterPro"/>
</dbReference>
<dbReference type="GO" id="GO:0019619">
    <property type="term" value="P:3,4-dihydroxybenzoate catabolic process"/>
    <property type="evidence" value="ECO:0000314"/>
    <property type="project" value="UniProtKB"/>
</dbReference>
<dbReference type="GO" id="GO:0046274">
    <property type="term" value="P:lignin catabolic process"/>
    <property type="evidence" value="ECO:0007669"/>
    <property type="project" value="UniProtKB-UniPathway"/>
</dbReference>
<dbReference type="Gene3D" id="3.30.360.10">
    <property type="entry name" value="Dihydrodipicolinate Reductase, domain 2"/>
    <property type="match status" value="1"/>
</dbReference>
<dbReference type="Gene3D" id="3.40.50.720">
    <property type="entry name" value="NAD(P)-binding Rossmann-like Domain"/>
    <property type="match status" value="1"/>
</dbReference>
<dbReference type="InterPro" id="IPR000683">
    <property type="entry name" value="Gfo/Idh/MocA-like_OxRdtase_N"/>
</dbReference>
<dbReference type="InterPro" id="IPR050463">
    <property type="entry name" value="Gfo/Idh/MocA_oxidrdct_glycsds"/>
</dbReference>
<dbReference type="InterPro" id="IPR045560">
    <property type="entry name" value="LigC_C"/>
</dbReference>
<dbReference type="InterPro" id="IPR036291">
    <property type="entry name" value="NAD(P)-bd_dom_sf"/>
</dbReference>
<dbReference type="PANTHER" id="PTHR43818">
    <property type="entry name" value="BCDNA.GH03377"/>
    <property type="match status" value="1"/>
</dbReference>
<dbReference type="PANTHER" id="PTHR43818:SF11">
    <property type="entry name" value="BCDNA.GH03377"/>
    <property type="match status" value="1"/>
</dbReference>
<dbReference type="Pfam" id="PF01408">
    <property type="entry name" value="GFO_IDH_MocA"/>
    <property type="match status" value="1"/>
</dbReference>
<dbReference type="Pfam" id="PF19858">
    <property type="entry name" value="OxRdtase_C"/>
    <property type="match status" value="1"/>
</dbReference>
<dbReference type="SUPFAM" id="SSF55347">
    <property type="entry name" value="Glyceraldehyde-3-phosphate dehydrogenase-like, C-terminal domain"/>
    <property type="match status" value="1"/>
</dbReference>
<dbReference type="SUPFAM" id="SSF51735">
    <property type="entry name" value="NAD(P)-binding Rossmann-fold domains"/>
    <property type="match status" value="1"/>
</dbReference>
<proteinExistence type="evidence at protein level"/>
<gene>
    <name type="primary">ligC</name>
</gene>
<keyword id="KW-0903">Direct protein sequencing</keyword>
<keyword id="KW-0520">NAD</keyword>
<keyword id="KW-0521">NADP</keyword>
<keyword id="KW-0560">Oxidoreductase</keyword>
<organism>
    <name type="scientific">Sphingobium sp. (strain NBRC 103272 / SYK-6)</name>
    <dbReference type="NCBI Taxonomy" id="627192"/>
    <lineage>
        <taxon>Bacteria</taxon>
        <taxon>Pseudomonadati</taxon>
        <taxon>Pseudomonadota</taxon>
        <taxon>Alphaproteobacteria</taxon>
        <taxon>Sphingomonadales</taxon>
        <taxon>Sphingomonadaceae</taxon>
        <taxon>Sphingobium</taxon>
    </lineage>
</organism>
<feature type="chain" id="PRO_0000418616" description="4-carboxy-2-hydroxymuconate-6-semialdehyde dehydrogenase">
    <location>
        <begin position="1"/>
        <end position="315"/>
    </location>
</feature>
<evidence type="ECO:0000269" key="1">
    <source>
    </source>
</evidence>
<evidence type="ECO:0000305" key="2"/>
<name>LIGC_SPHSK</name>
<protein>
    <recommendedName>
        <fullName>4-carboxy-2-hydroxymuconate-6-semialdehyde dehydrogenase</fullName>
        <shortName>CHMS dehydrogenase</shortName>
        <ecNumber>1.1.1.312</ecNumber>
    </recommendedName>
    <alternativeName>
        <fullName>2-hydroxy-4-carboxymuconate semialdehyde hemiacetal dehydrogenase</fullName>
    </alternativeName>
</protein>